<name>HIS1_SYNY3</name>
<feature type="chain" id="PRO_0000151943" description="ATP phosphoribosyltransferase">
    <location>
        <begin position="1"/>
        <end position="210"/>
    </location>
</feature>
<comment type="function">
    <text evidence="1">Catalyzes the condensation of ATP and 5-phosphoribose 1-diphosphate to form N'-(5'-phosphoribosyl)-ATP (PR-ATP). Has a crucial role in the pathway because the rate of histidine biosynthesis seems to be controlled primarily by regulation of HisG enzymatic activity (By similarity).</text>
</comment>
<comment type="catalytic activity">
    <reaction>
        <text>1-(5-phospho-beta-D-ribosyl)-ATP + diphosphate = 5-phospho-alpha-D-ribose 1-diphosphate + ATP</text>
        <dbReference type="Rhea" id="RHEA:18473"/>
        <dbReference type="ChEBI" id="CHEBI:30616"/>
        <dbReference type="ChEBI" id="CHEBI:33019"/>
        <dbReference type="ChEBI" id="CHEBI:58017"/>
        <dbReference type="ChEBI" id="CHEBI:73183"/>
        <dbReference type="EC" id="2.4.2.17"/>
    </reaction>
</comment>
<comment type="pathway">
    <text>Amino-acid biosynthesis; L-histidine biosynthesis; L-histidine from 5-phospho-alpha-D-ribose 1-diphosphate: step 1/9.</text>
</comment>
<comment type="subunit">
    <text evidence="1">Heteromultimer composed of HisG and HisZ subunits.</text>
</comment>
<comment type="subcellular location">
    <subcellularLocation>
        <location evidence="1">Cytoplasm</location>
    </subcellularLocation>
</comment>
<comment type="domain">
    <text>Lacks the C-terminal regulatory region which is replaced by HisZ.</text>
</comment>
<comment type="similarity">
    <text evidence="2">Belongs to the ATP phosphoribosyltransferase family. Short subfamily.</text>
</comment>
<reference key="1">
    <citation type="journal article" date="1995" name="DNA Res.">
        <title>Sequence analysis of the genome of the unicellular cyanobacterium Synechocystis sp. strain PCC6803. I. Sequence features in the 1 Mb region from map positions 64% to 92% of the genome.</title>
        <authorList>
            <person name="Kaneko T."/>
            <person name="Tanaka A."/>
            <person name="Sato S."/>
            <person name="Kotani H."/>
            <person name="Sazuka T."/>
            <person name="Miyajima N."/>
            <person name="Sugiura M."/>
            <person name="Tabata S."/>
        </authorList>
    </citation>
    <scope>NUCLEOTIDE SEQUENCE [LARGE SCALE GENOMIC DNA]</scope>
    <source>
        <strain>ATCC 27184 / PCC 6803 / N-1</strain>
    </source>
</reference>
<reference key="2">
    <citation type="journal article" date="1996" name="DNA Res.">
        <title>Sequence analysis of the genome of the unicellular cyanobacterium Synechocystis sp. strain PCC6803. II. Sequence determination of the entire genome and assignment of potential protein-coding regions.</title>
        <authorList>
            <person name="Kaneko T."/>
            <person name="Sato S."/>
            <person name="Kotani H."/>
            <person name="Tanaka A."/>
            <person name="Asamizu E."/>
            <person name="Nakamura Y."/>
            <person name="Miyajima N."/>
            <person name="Hirosawa M."/>
            <person name="Sugiura M."/>
            <person name="Sasamoto S."/>
            <person name="Kimura T."/>
            <person name="Hosouchi T."/>
            <person name="Matsuno A."/>
            <person name="Muraki A."/>
            <person name="Nakazaki N."/>
            <person name="Naruo K."/>
            <person name="Okumura S."/>
            <person name="Shimpo S."/>
            <person name="Takeuchi C."/>
            <person name="Wada T."/>
            <person name="Watanabe A."/>
            <person name="Yamada M."/>
            <person name="Yasuda M."/>
            <person name="Tabata S."/>
        </authorList>
    </citation>
    <scope>NUCLEOTIDE SEQUENCE [LARGE SCALE GENOMIC DNA]</scope>
    <source>
        <strain>ATCC 27184 / PCC 6803 / Kazusa</strain>
    </source>
</reference>
<sequence length="210" mass="23436">MLTIALPKGSLLRDSIDRFQQIGLDFSAFLEPKNRQLQILDPTHRAKALLVRAWDVPVYVEYGQAQLGIVGYDILREKKPAVAQLADLNFGGCRLSVAVPQASPYRRSVDLPPHGRVASKFVHCALEHFRRLDLPVEIIPLYGSVELGPITGMSEAIVDLVSTGRTLQENGLMEIEVLFDSSARLIAHPLSYRVNGDRLLDWVEKLRSVI</sequence>
<proteinExistence type="inferred from homology"/>
<protein>
    <recommendedName>
        <fullName>ATP phosphoribosyltransferase</fullName>
        <shortName>ATP-PRT</shortName>
        <shortName>ATP-PRTase</shortName>
        <ecNumber>2.4.2.17</ecNumber>
    </recommendedName>
</protein>
<evidence type="ECO:0000250" key="1"/>
<evidence type="ECO:0000305" key="2"/>
<accession>Q55503</accession>
<gene>
    <name type="primary">hisG</name>
    <name type="ordered locus">sll0900</name>
</gene>
<keyword id="KW-0028">Amino-acid biosynthesis</keyword>
<keyword id="KW-0067">ATP-binding</keyword>
<keyword id="KW-0963">Cytoplasm</keyword>
<keyword id="KW-0328">Glycosyltransferase</keyword>
<keyword id="KW-0368">Histidine biosynthesis</keyword>
<keyword id="KW-0547">Nucleotide-binding</keyword>
<keyword id="KW-1185">Reference proteome</keyword>
<keyword id="KW-0808">Transferase</keyword>
<organism>
    <name type="scientific">Synechocystis sp. (strain ATCC 27184 / PCC 6803 / Kazusa)</name>
    <dbReference type="NCBI Taxonomy" id="1111708"/>
    <lineage>
        <taxon>Bacteria</taxon>
        <taxon>Bacillati</taxon>
        <taxon>Cyanobacteriota</taxon>
        <taxon>Cyanophyceae</taxon>
        <taxon>Synechococcales</taxon>
        <taxon>Merismopediaceae</taxon>
        <taxon>Synechocystis</taxon>
    </lineage>
</organism>
<dbReference type="EC" id="2.4.2.17"/>
<dbReference type="EMBL" id="BA000022">
    <property type="protein sequence ID" value="BAA10855.1"/>
    <property type="molecule type" value="Genomic_DNA"/>
</dbReference>
<dbReference type="PIR" id="S76008">
    <property type="entry name" value="S76008"/>
</dbReference>
<dbReference type="SMR" id="Q55503"/>
<dbReference type="FunCoup" id="Q55503">
    <property type="interactions" value="394"/>
</dbReference>
<dbReference type="STRING" id="1148.gene:10500361"/>
<dbReference type="PaxDb" id="1148-1001367"/>
<dbReference type="EnsemblBacteria" id="BAA10855">
    <property type="protein sequence ID" value="BAA10855"/>
    <property type="gene ID" value="BAA10855"/>
</dbReference>
<dbReference type="KEGG" id="syn:sll0900"/>
<dbReference type="eggNOG" id="COG0040">
    <property type="taxonomic scope" value="Bacteria"/>
</dbReference>
<dbReference type="InParanoid" id="Q55503"/>
<dbReference type="PhylomeDB" id="Q55503"/>
<dbReference type="UniPathway" id="UPA00031">
    <property type="reaction ID" value="UER00006"/>
</dbReference>
<dbReference type="Proteomes" id="UP000001425">
    <property type="component" value="Chromosome"/>
</dbReference>
<dbReference type="GO" id="GO:0005737">
    <property type="term" value="C:cytoplasm"/>
    <property type="evidence" value="ECO:0007669"/>
    <property type="project" value="UniProtKB-SubCell"/>
</dbReference>
<dbReference type="GO" id="GO:0005524">
    <property type="term" value="F:ATP binding"/>
    <property type="evidence" value="ECO:0007669"/>
    <property type="project" value="UniProtKB-KW"/>
</dbReference>
<dbReference type="GO" id="GO:0003879">
    <property type="term" value="F:ATP phosphoribosyltransferase activity"/>
    <property type="evidence" value="ECO:0000318"/>
    <property type="project" value="GO_Central"/>
</dbReference>
<dbReference type="GO" id="GO:0000105">
    <property type="term" value="P:L-histidine biosynthetic process"/>
    <property type="evidence" value="ECO:0000318"/>
    <property type="project" value="GO_Central"/>
</dbReference>
<dbReference type="CDD" id="cd13595">
    <property type="entry name" value="PBP2_HisGs"/>
    <property type="match status" value="1"/>
</dbReference>
<dbReference type="FunFam" id="3.40.190.10:FF:000008">
    <property type="entry name" value="ATP phosphoribosyltransferase"/>
    <property type="match status" value="1"/>
</dbReference>
<dbReference type="Gene3D" id="3.40.190.10">
    <property type="entry name" value="Periplasmic binding protein-like II"/>
    <property type="match status" value="2"/>
</dbReference>
<dbReference type="HAMAP" id="MF_01018">
    <property type="entry name" value="HisG_Short"/>
    <property type="match status" value="1"/>
</dbReference>
<dbReference type="InterPro" id="IPR013820">
    <property type="entry name" value="ATP_PRibTrfase_cat"/>
</dbReference>
<dbReference type="InterPro" id="IPR018198">
    <property type="entry name" value="ATP_PRibTrfase_CS"/>
</dbReference>
<dbReference type="InterPro" id="IPR001348">
    <property type="entry name" value="ATP_PRibTrfase_HisG"/>
</dbReference>
<dbReference type="InterPro" id="IPR024893">
    <property type="entry name" value="ATP_PRibTrfase_HisG_short"/>
</dbReference>
<dbReference type="NCBIfam" id="TIGR00070">
    <property type="entry name" value="hisG"/>
    <property type="match status" value="1"/>
</dbReference>
<dbReference type="PANTHER" id="PTHR21403:SF8">
    <property type="entry name" value="ATP PHOSPHORIBOSYLTRANSFERASE"/>
    <property type="match status" value="1"/>
</dbReference>
<dbReference type="PANTHER" id="PTHR21403">
    <property type="entry name" value="ATP PHOSPHORIBOSYLTRANSFERASE ATP-PRTASE"/>
    <property type="match status" value="1"/>
</dbReference>
<dbReference type="Pfam" id="PF01634">
    <property type="entry name" value="HisG"/>
    <property type="match status" value="1"/>
</dbReference>
<dbReference type="SUPFAM" id="SSF53850">
    <property type="entry name" value="Periplasmic binding protein-like II"/>
    <property type="match status" value="1"/>
</dbReference>
<dbReference type="PROSITE" id="PS01316">
    <property type="entry name" value="ATP_P_PHORIBOSYLTR"/>
    <property type="match status" value="1"/>
</dbReference>